<comment type="function">
    <text evidence="1">Catalyzes the isomerization between 2-isopropylmalate and 3-isopropylmalate, via the formation of 2-isopropylmaleate.</text>
</comment>
<comment type="catalytic activity">
    <reaction evidence="1">
        <text>(2R,3S)-3-isopropylmalate = (2S)-2-isopropylmalate</text>
        <dbReference type="Rhea" id="RHEA:32287"/>
        <dbReference type="ChEBI" id="CHEBI:1178"/>
        <dbReference type="ChEBI" id="CHEBI:35121"/>
        <dbReference type="EC" id="4.2.1.33"/>
    </reaction>
</comment>
<comment type="cofactor">
    <cofactor evidence="1">
        <name>[4Fe-4S] cluster</name>
        <dbReference type="ChEBI" id="CHEBI:49883"/>
    </cofactor>
    <text evidence="1">Binds 1 [4Fe-4S] cluster per subunit.</text>
</comment>
<comment type="pathway">
    <text evidence="1">Amino-acid biosynthesis; L-leucine biosynthesis; L-leucine from 3-methyl-2-oxobutanoate: step 2/4.</text>
</comment>
<comment type="subunit">
    <text evidence="1">Heterodimer of LeuC and LeuD.</text>
</comment>
<comment type="similarity">
    <text evidence="1">Belongs to the aconitase/IPM isomerase family. LeuC type 1 subfamily.</text>
</comment>
<comment type="sequence caution" evidence="2">
    <conflict type="erroneous initiation">
        <sequence resource="EMBL-CDS" id="ABO67930"/>
    </conflict>
</comment>
<keyword id="KW-0004">4Fe-4S</keyword>
<keyword id="KW-0028">Amino-acid biosynthesis</keyword>
<keyword id="KW-0100">Branched-chain amino acid biosynthesis</keyword>
<keyword id="KW-0408">Iron</keyword>
<keyword id="KW-0411">Iron-sulfur</keyword>
<keyword id="KW-0432">Leucine biosynthesis</keyword>
<keyword id="KW-0456">Lyase</keyword>
<keyword id="KW-0479">Metal-binding</keyword>
<feature type="chain" id="PRO_0000319814" description="3-isopropylmalate dehydratase large subunit">
    <location>
        <begin position="1"/>
        <end position="471"/>
    </location>
</feature>
<feature type="binding site" evidence="1">
    <location>
        <position position="347"/>
    </location>
    <ligand>
        <name>[4Fe-4S] cluster</name>
        <dbReference type="ChEBI" id="CHEBI:49883"/>
    </ligand>
</feature>
<feature type="binding site" evidence="1">
    <location>
        <position position="407"/>
    </location>
    <ligand>
        <name>[4Fe-4S] cluster</name>
        <dbReference type="ChEBI" id="CHEBI:49883"/>
    </ligand>
</feature>
<feature type="binding site" evidence="1">
    <location>
        <position position="410"/>
    </location>
    <ligand>
        <name>[4Fe-4S] cluster</name>
        <dbReference type="ChEBI" id="CHEBI:49883"/>
    </ligand>
</feature>
<dbReference type="EC" id="4.2.1.33" evidence="1"/>
<dbReference type="EMBL" id="CP000557">
    <property type="protein sequence ID" value="ABO67930.1"/>
    <property type="status" value="ALT_INIT"/>
    <property type="molecule type" value="Genomic_DNA"/>
</dbReference>
<dbReference type="RefSeq" id="WP_008881115.1">
    <property type="nucleotide sequence ID" value="NC_009328.1"/>
</dbReference>
<dbReference type="SMR" id="A4IRH6"/>
<dbReference type="GeneID" id="87623267"/>
<dbReference type="KEGG" id="gtn:GTNG_2585"/>
<dbReference type="eggNOG" id="COG0065">
    <property type="taxonomic scope" value="Bacteria"/>
</dbReference>
<dbReference type="HOGENOM" id="CLU_006714_3_4_9"/>
<dbReference type="UniPathway" id="UPA00048">
    <property type="reaction ID" value="UER00071"/>
</dbReference>
<dbReference type="Proteomes" id="UP000001578">
    <property type="component" value="Chromosome"/>
</dbReference>
<dbReference type="GO" id="GO:0003861">
    <property type="term" value="F:3-isopropylmalate dehydratase activity"/>
    <property type="evidence" value="ECO:0007669"/>
    <property type="project" value="UniProtKB-UniRule"/>
</dbReference>
<dbReference type="GO" id="GO:0051539">
    <property type="term" value="F:4 iron, 4 sulfur cluster binding"/>
    <property type="evidence" value="ECO:0007669"/>
    <property type="project" value="UniProtKB-KW"/>
</dbReference>
<dbReference type="GO" id="GO:0046872">
    <property type="term" value="F:metal ion binding"/>
    <property type="evidence" value="ECO:0007669"/>
    <property type="project" value="UniProtKB-KW"/>
</dbReference>
<dbReference type="GO" id="GO:0009098">
    <property type="term" value="P:L-leucine biosynthetic process"/>
    <property type="evidence" value="ECO:0007669"/>
    <property type="project" value="UniProtKB-UniRule"/>
</dbReference>
<dbReference type="CDD" id="cd01583">
    <property type="entry name" value="IPMI"/>
    <property type="match status" value="1"/>
</dbReference>
<dbReference type="FunFam" id="3.30.499.10:FF:000007">
    <property type="entry name" value="3-isopropylmalate dehydratase large subunit"/>
    <property type="match status" value="1"/>
</dbReference>
<dbReference type="Gene3D" id="3.30.499.10">
    <property type="entry name" value="Aconitase, domain 3"/>
    <property type="match status" value="2"/>
</dbReference>
<dbReference type="HAMAP" id="MF_01026">
    <property type="entry name" value="LeuC_type1"/>
    <property type="match status" value="1"/>
</dbReference>
<dbReference type="InterPro" id="IPR004430">
    <property type="entry name" value="3-IsopropMal_deHydase_lsu"/>
</dbReference>
<dbReference type="InterPro" id="IPR015931">
    <property type="entry name" value="Acnase/IPM_dHydase_lsu_aba_1/3"/>
</dbReference>
<dbReference type="InterPro" id="IPR001030">
    <property type="entry name" value="Acoase/IPM_deHydtase_lsu_aba"/>
</dbReference>
<dbReference type="InterPro" id="IPR018136">
    <property type="entry name" value="Aconitase_4Fe-4S_BS"/>
</dbReference>
<dbReference type="InterPro" id="IPR036008">
    <property type="entry name" value="Aconitase_4Fe-4S_dom"/>
</dbReference>
<dbReference type="InterPro" id="IPR050067">
    <property type="entry name" value="IPM_dehydratase_rel_enz"/>
</dbReference>
<dbReference type="InterPro" id="IPR033941">
    <property type="entry name" value="IPMI_cat"/>
</dbReference>
<dbReference type="NCBIfam" id="TIGR00170">
    <property type="entry name" value="leuC"/>
    <property type="match status" value="1"/>
</dbReference>
<dbReference type="NCBIfam" id="NF004016">
    <property type="entry name" value="PRK05478.1"/>
    <property type="match status" value="1"/>
</dbReference>
<dbReference type="NCBIfam" id="NF009116">
    <property type="entry name" value="PRK12466.1"/>
    <property type="match status" value="1"/>
</dbReference>
<dbReference type="PANTHER" id="PTHR43822:SF9">
    <property type="entry name" value="3-ISOPROPYLMALATE DEHYDRATASE"/>
    <property type="match status" value="1"/>
</dbReference>
<dbReference type="PANTHER" id="PTHR43822">
    <property type="entry name" value="HOMOACONITASE, MITOCHONDRIAL-RELATED"/>
    <property type="match status" value="1"/>
</dbReference>
<dbReference type="Pfam" id="PF00330">
    <property type="entry name" value="Aconitase"/>
    <property type="match status" value="1"/>
</dbReference>
<dbReference type="PRINTS" id="PR00415">
    <property type="entry name" value="ACONITASE"/>
</dbReference>
<dbReference type="SUPFAM" id="SSF53732">
    <property type="entry name" value="Aconitase iron-sulfur domain"/>
    <property type="match status" value="1"/>
</dbReference>
<dbReference type="PROSITE" id="PS00450">
    <property type="entry name" value="ACONITASE_1"/>
    <property type="match status" value="1"/>
</dbReference>
<dbReference type="PROSITE" id="PS01244">
    <property type="entry name" value="ACONITASE_2"/>
    <property type="match status" value="1"/>
</dbReference>
<gene>
    <name evidence="1" type="primary">leuC</name>
    <name type="ordered locus">GTNG_2585</name>
</gene>
<proteinExistence type="inferred from homology"/>
<sequence length="471" mass="51630">MKPKTIIEKIWENHVVYREEGKPDLLYIDLHLVHEVTSPQAFEGLRQNGRKVRRPDLTFATMDHNVPTVNRFVITDEVARNQIAALERNCREFGIPLADLHSEEQGIVHVIGPELGLTQPGKTIVCGDSHTSTHGAFGALAFGIGTSEVEHVLATQTLWQHKPKTLQIRINGQLGKGVTAKDVILAIIGRYGVGVGTGYIIEFTGEAIRRMSMEERMTICNMSIEAGARAGLISPDETTFAYLRGRKYAPKGEEFDQAVERWRALASDEGAEYDKTIEIDASTIAPMVTWGTNPSMSTSVDGTVPDPEQFESETERNAVRRALEYMGLKPGMSITEIPVQHVFIGSCTNSRISDLREAAKIVKGQKVAPGVRALVVPGSQQVKKQAEEEGLAQIFLDAGFEWRDAGCSACLGMNPDIIPEGEHCASTSNRNFEGRQGKGARTHLVSPAMAAAAAIYGRFVDVRQLEAEPVR</sequence>
<name>LEUC_GEOTN</name>
<accession>A4IRH6</accession>
<protein>
    <recommendedName>
        <fullName evidence="1">3-isopropylmalate dehydratase large subunit</fullName>
        <ecNumber evidence="1">4.2.1.33</ecNumber>
    </recommendedName>
    <alternativeName>
        <fullName evidence="1">Alpha-IPM isomerase</fullName>
        <shortName evidence="1">IPMI</shortName>
    </alternativeName>
    <alternativeName>
        <fullName evidence="1">Isopropylmalate isomerase</fullName>
    </alternativeName>
</protein>
<reference key="1">
    <citation type="journal article" date="2007" name="Proc. Natl. Acad. Sci. U.S.A.">
        <title>Genome and proteome of long-chain alkane degrading Geobacillus thermodenitrificans NG80-2 isolated from a deep-subsurface oil reservoir.</title>
        <authorList>
            <person name="Feng L."/>
            <person name="Wang W."/>
            <person name="Cheng J."/>
            <person name="Ren Y."/>
            <person name="Zhao G."/>
            <person name="Gao C."/>
            <person name="Tang Y."/>
            <person name="Liu X."/>
            <person name="Han W."/>
            <person name="Peng X."/>
            <person name="Liu R."/>
            <person name="Wang L."/>
        </authorList>
    </citation>
    <scope>NUCLEOTIDE SEQUENCE [LARGE SCALE GENOMIC DNA]</scope>
    <source>
        <strain>NG80-2</strain>
    </source>
</reference>
<evidence type="ECO:0000255" key="1">
    <source>
        <dbReference type="HAMAP-Rule" id="MF_01026"/>
    </source>
</evidence>
<evidence type="ECO:0000305" key="2"/>
<organism>
    <name type="scientific">Geobacillus thermodenitrificans (strain NG80-2)</name>
    <dbReference type="NCBI Taxonomy" id="420246"/>
    <lineage>
        <taxon>Bacteria</taxon>
        <taxon>Bacillati</taxon>
        <taxon>Bacillota</taxon>
        <taxon>Bacilli</taxon>
        <taxon>Bacillales</taxon>
        <taxon>Anoxybacillaceae</taxon>
        <taxon>Geobacillus</taxon>
    </lineage>
</organism>